<geneLocation type="non-photosynthetic plastid"/>
<proteinExistence type="inferred from homology"/>
<reference key="1">
    <citation type="journal article" date="2000" name="Protist">
        <title>Complete gene map of the plastid genome of the nonphotosynthetic euglenoid flagellate Astasia longa.</title>
        <authorList>
            <person name="Gockel G."/>
            <person name="Hachtel W."/>
        </authorList>
    </citation>
    <scope>NUCLEOTIDE SEQUENCE [LARGE SCALE GENOMIC DNA]</scope>
    <source>
        <strain>CCAP 1204-17a</strain>
    </source>
</reference>
<name>RK16_EUGLO</name>
<dbReference type="EMBL" id="AJ294725">
    <property type="protein sequence ID" value="CAC24600.1"/>
    <property type="molecule type" value="Genomic_DNA"/>
</dbReference>
<dbReference type="RefSeq" id="NP_074989.1">
    <property type="nucleotide sequence ID" value="NC_002652.1"/>
</dbReference>
<dbReference type="SMR" id="P58140"/>
<dbReference type="GeneID" id="802506"/>
<dbReference type="GO" id="GO:0005762">
    <property type="term" value="C:mitochondrial large ribosomal subunit"/>
    <property type="evidence" value="ECO:0007669"/>
    <property type="project" value="TreeGrafter"/>
</dbReference>
<dbReference type="GO" id="GO:0009536">
    <property type="term" value="C:plastid"/>
    <property type="evidence" value="ECO:0007669"/>
    <property type="project" value="UniProtKB-SubCell"/>
</dbReference>
<dbReference type="GO" id="GO:0019843">
    <property type="term" value="F:rRNA binding"/>
    <property type="evidence" value="ECO:0007669"/>
    <property type="project" value="InterPro"/>
</dbReference>
<dbReference type="GO" id="GO:0003735">
    <property type="term" value="F:structural constituent of ribosome"/>
    <property type="evidence" value="ECO:0007669"/>
    <property type="project" value="InterPro"/>
</dbReference>
<dbReference type="GO" id="GO:0032543">
    <property type="term" value="P:mitochondrial translation"/>
    <property type="evidence" value="ECO:0007669"/>
    <property type="project" value="TreeGrafter"/>
</dbReference>
<dbReference type="CDD" id="cd01433">
    <property type="entry name" value="Ribosomal_L16_L10e"/>
    <property type="match status" value="1"/>
</dbReference>
<dbReference type="FunFam" id="3.90.1170.10:FF:000001">
    <property type="entry name" value="50S ribosomal protein L16"/>
    <property type="match status" value="1"/>
</dbReference>
<dbReference type="Gene3D" id="3.90.1170.10">
    <property type="entry name" value="Ribosomal protein L10e/L16"/>
    <property type="match status" value="1"/>
</dbReference>
<dbReference type="HAMAP" id="MF_01342">
    <property type="entry name" value="Ribosomal_uL16"/>
    <property type="match status" value="1"/>
</dbReference>
<dbReference type="InterPro" id="IPR047873">
    <property type="entry name" value="Ribosomal_uL16"/>
</dbReference>
<dbReference type="InterPro" id="IPR000114">
    <property type="entry name" value="Ribosomal_uL16_bact-type"/>
</dbReference>
<dbReference type="InterPro" id="IPR020798">
    <property type="entry name" value="Ribosomal_uL16_CS"/>
</dbReference>
<dbReference type="InterPro" id="IPR016180">
    <property type="entry name" value="Ribosomal_uL16_dom"/>
</dbReference>
<dbReference type="InterPro" id="IPR036920">
    <property type="entry name" value="Ribosomal_uL16_sf"/>
</dbReference>
<dbReference type="NCBIfam" id="TIGR01164">
    <property type="entry name" value="rplP_bact"/>
    <property type="match status" value="1"/>
</dbReference>
<dbReference type="PANTHER" id="PTHR12220">
    <property type="entry name" value="50S/60S RIBOSOMAL PROTEIN L16"/>
    <property type="match status" value="1"/>
</dbReference>
<dbReference type="PANTHER" id="PTHR12220:SF13">
    <property type="entry name" value="LARGE RIBOSOMAL SUBUNIT PROTEIN UL16M"/>
    <property type="match status" value="1"/>
</dbReference>
<dbReference type="Pfam" id="PF00252">
    <property type="entry name" value="Ribosomal_L16"/>
    <property type="match status" value="1"/>
</dbReference>
<dbReference type="PRINTS" id="PR00060">
    <property type="entry name" value="RIBOSOMALL16"/>
</dbReference>
<dbReference type="SUPFAM" id="SSF54686">
    <property type="entry name" value="Ribosomal protein L16p/L10e"/>
    <property type="match status" value="1"/>
</dbReference>
<dbReference type="PROSITE" id="PS00586">
    <property type="entry name" value="RIBOSOMAL_L16_1"/>
    <property type="match status" value="1"/>
</dbReference>
<dbReference type="PROSITE" id="PS00701">
    <property type="entry name" value="RIBOSOMAL_L16_2"/>
    <property type="match status" value="1"/>
</dbReference>
<accession>P58140</accession>
<evidence type="ECO:0000255" key="1">
    <source>
        <dbReference type="HAMAP-Rule" id="MF_01342"/>
    </source>
</evidence>
<evidence type="ECO:0000305" key="2"/>
<protein>
    <recommendedName>
        <fullName evidence="1">Large ribosomal subunit protein uL16c</fullName>
    </recommendedName>
    <alternativeName>
        <fullName evidence="2">50S ribosomal protein L16, plastid</fullName>
    </alternativeName>
</protein>
<sequence length="133" mass="15308">MLKPKKTKFHKYHRGKIKGKIYDNVNFGEFALQSLEFGWITSKQIEAIRKVITRYSKKGGKLWIRIFPDKPITFRPAETRMGSGKGNVEYWVAVIKPGKIICEISGIPNSISKYCLKIAGYKLPVKTKILYKN</sequence>
<organism>
    <name type="scientific">Euglena longa</name>
    <name type="common">Euglenophycean alga</name>
    <name type="synonym">Astasia longa</name>
    <dbReference type="NCBI Taxonomy" id="3037"/>
    <lineage>
        <taxon>Eukaryota</taxon>
        <taxon>Discoba</taxon>
        <taxon>Euglenozoa</taxon>
        <taxon>Euglenida</taxon>
        <taxon>Spirocuta</taxon>
        <taxon>Euglenophyceae</taxon>
        <taxon>Euglenales</taxon>
        <taxon>Euglenaceae</taxon>
        <taxon>Euglena</taxon>
    </lineage>
</organism>
<keyword id="KW-0934">Plastid</keyword>
<keyword id="KW-0687">Ribonucleoprotein</keyword>
<keyword id="KW-0689">Ribosomal protein</keyword>
<comment type="subunit">
    <text evidence="1">Part of the 50S ribosomal subunit.</text>
</comment>
<comment type="subcellular location">
    <subcellularLocation>
        <location>Plastid</location>
    </subcellularLocation>
</comment>
<comment type="similarity">
    <text evidence="1">Belongs to the universal ribosomal protein uL16 family.</text>
</comment>
<feature type="chain" id="PRO_0000062269" description="Large ribosomal subunit protein uL16c">
    <location>
        <begin position="1"/>
        <end position="133"/>
    </location>
</feature>
<gene>
    <name evidence="1" type="primary">rpl16</name>
</gene>